<gene>
    <name evidence="1" type="primary">rpl33</name>
</gene>
<reference key="1">
    <citation type="submission" date="2003-02" db="EMBL/GenBank/DDBJ databases">
        <title>Complete nucleotide sequence of Pinus koraiensis.</title>
        <authorList>
            <person name="Noh E.W."/>
            <person name="Lee J.S."/>
            <person name="Choi Y.I."/>
            <person name="Han M.S."/>
            <person name="Yi Y.S."/>
            <person name="Han S.U."/>
        </authorList>
    </citation>
    <scope>NUCLEOTIDE SEQUENCE [LARGE SCALE GENOMIC DNA]</scope>
    <source>
        <strain>KangWon16</strain>
    </source>
</reference>
<keyword id="KW-0150">Chloroplast</keyword>
<keyword id="KW-0934">Plastid</keyword>
<keyword id="KW-0687">Ribonucleoprotein</keyword>
<keyword id="KW-0689">Ribosomal protein</keyword>
<protein>
    <recommendedName>
        <fullName evidence="1">Large ribosomal subunit protein bL33c</fullName>
    </recommendedName>
    <alternativeName>
        <fullName evidence="2">50S ribosomal protein L33, chloroplastic</fullName>
    </alternativeName>
</protein>
<accession>Q7GUD1</accession>
<feature type="chain" id="PRO_0000170297" description="Large ribosomal subunit protein bL33c">
    <location>
        <begin position="1"/>
        <end position="68"/>
    </location>
</feature>
<organism>
    <name type="scientific">Pinus koraiensis</name>
    <name type="common">Korean pine</name>
    <dbReference type="NCBI Taxonomy" id="88728"/>
    <lineage>
        <taxon>Eukaryota</taxon>
        <taxon>Viridiplantae</taxon>
        <taxon>Streptophyta</taxon>
        <taxon>Embryophyta</taxon>
        <taxon>Tracheophyta</taxon>
        <taxon>Spermatophyta</taxon>
        <taxon>Pinopsida</taxon>
        <taxon>Pinidae</taxon>
        <taxon>Conifers I</taxon>
        <taxon>Pinales</taxon>
        <taxon>Pinaceae</taxon>
        <taxon>Pinus</taxon>
        <taxon>Pinus subgen. Strobus</taxon>
    </lineage>
</organism>
<geneLocation type="chloroplast"/>
<comment type="subcellular location">
    <subcellularLocation>
        <location>Plastid</location>
        <location>Chloroplast</location>
    </subcellularLocation>
</comment>
<comment type="similarity">
    <text evidence="1">Belongs to the bacterial ribosomal protein bL33 family.</text>
</comment>
<dbReference type="EMBL" id="AY228468">
    <property type="protein sequence ID" value="AAO74029.1"/>
    <property type="molecule type" value="Genomic_DNA"/>
</dbReference>
<dbReference type="RefSeq" id="NP_817181.1">
    <property type="nucleotide sequence ID" value="NC_004677.2"/>
</dbReference>
<dbReference type="GeneID" id="806914"/>
<dbReference type="GO" id="GO:0009507">
    <property type="term" value="C:chloroplast"/>
    <property type="evidence" value="ECO:0007669"/>
    <property type="project" value="UniProtKB-SubCell"/>
</dbReference>
<dbReference type="GO" id="GO:1990904">
    <property type="term" value="C:ribonucleoprotein complex"/>
    <property type="evidence" value="ECO:0007669"/>
    <property type="project" value="UniProtKB-KW"/>
</dbReference>
<dbReference type="GO" id="GO:0005840">
    <property type="term" value="C:ribosome"/>
    <property type="evidence" value="ECO:0007669"/>
    <property type="project" value="UniProtKB-KW"/>
</dbReference>
<dbReference type="GO" id="GO:0003735">
    <property type="term" value="F:structural constituent of ribosome"/>
    <property type="evidence" value="ECO:0007669"/>
    <property type="project" value="InterPro"/>
</dbReference>
<dbReference type="GO" id="GO:0006412">
    <property type="term" value="P:translation"/>
    <property type="evidence" value="ECO:0007669"/>
    <property type="project" value="UniProtKB-UniRule"/>
</dbReference>
<dbReference type="Gene3D" id="2.20.28.120">
    <property type="entry name" value="Ribosomal protein L33"/>
    <property type="match status" value="1"/>
</dbReference>
<dbReference type="HAMAP" id="MF_00294">
    <property type="entry name" value="Ribosomal_bL33"/>
    <property type="match status" value="1"/>
</dbReference>
<dbReference type="InterPro" id="IPR001705">
    <property type="entry name" value="Ribosomal_bL33"/>
</dbReference>
<dbReference type="InterPro" id="IPR018264">
    <property type="entry name" value="Ribosomal_bL33_CS"/>
</dbReference>
<dbReference type="InterPro" id="IPR038584">
    <property type="entry name" value="Ribosomal_bL33_sf"/>
</dbReference>
<dbReference type="InterPro" id="IPR011332">
    <property type="entry name" value="Ribosomal_zn-bd"/>
</dbReference>
<dbReference type="NCBIfam" id="NF001764">
    <property type="entry name" value="PRK00504.1"/>
    <property type="match status" value="1"/>
</dbReference>
<dbReference type="NCBIfam" id="NF001860">
    <property type="entry name" value="PRK00595.1"/>
    <property type="match status" value="1"/>
</dbReference>
<dbReference type="NCBIfam" id="TIGR01023">
    <property type="entry name" value="rpmG_bact"/>
    <property type="match status" value="1"/>
</dbReference>
<dbReference type="PANTHER" id="PTHR43168">
    <property type="entry name" value="50S RIBOSOMAL PROTEIN L33, CHLOROPLASTIC"/>
    <property type="match status" value="1"/>
</dbReference>
<dbReference type="PANTHER" id="PTHR43168:SF2">
    <property type="entry name" value="LARGE RIBOSOMAL SUBUNIT PROTEIN BL33C"/>
    <property type="match status" value="1"/>
</dbReference>
<dbReference type="Pfam" id="PF00471">
    <property type="entry name" value="Ribosomal_L33"/>
    <property type="match status" value="1"/>
</dbReference>
<dbReference type="SUPFAM" id="SSF57829">
    <property type="entry name" value="Zn-binding ribosomal proteins"/>
    <property type="match status" value="1"/>
</dbReference>
<dbReference type="PROSITE" id="PS00582">
    <property type="entry name" value="RIBOSOMAL_L33"/>
    <property type="match status" value="1"/>
</dbReference>
<proteinExistence type="inferred from homology"/>
<evidence type="ECO:0000255" key="1">
    <source>
        <dbReference type="HAMAP-Rule" id="MF_00294"/>
    </source>
</evidence>
<evidence type="ECO:0000305" key="2"/>
<sequence>MAKSGDIRVTITLECTSCTQDSVYKRFPGISRYTTRKNRRNTPIRLESNKFCPYCYKHTIHGEIKKRD</sequence>
<name>RK33_PINKO</name>